<protein>
    <recommendedName>
        <fullName>RWD domain-containing protein 3</fullName>
    </recommendedName>
    <alternativeName>
        <fullName>RWD domain-containing sumoylation enhancer</fullName>
        <shortName evidence="15">RSUME</shortName>
    </alternativeName>
</protein>
<feature type="chain" id="PRO_0000097545" description="RWD domain-containing protein 3">
    <location>
        <begin position="1"/>
        <end position="267"/>
    </location>
</feature>
<feature type="domain" description="RWD" evidence="2">
    <location>
        <begin position="7"/>
        <end position="114"/>
    </location>
</feature>
<feature type="region of interest" description="Interaction with UBE2I/UBC9" evidence="10">
    <location>
        <begin position="13"/>
        <end position="15"/>
    </location>
</feature>
<feature type="region of interest" description="Interaction with UBE2I/UBC9" evidence="10">
    <location>
        <begin position="100"/>
        <end position="102"/>
    </location>
</feature>
<feature type="splice variant" id="VSP_035411" description="In isoform 3." evidence="13">
    <original>MAEPVQEELSVLAAIFCRPHEWEVLSRS</original>
    <variation>MFLSCGSLHQRGP</variation>
    <location>
        <begin position="1"/>
        <end position="28"/>
    </location>
</feature>
<feature type="splice variant" id="VSP_035412" description="In isoform 3 and isoform 4." evidence="13">
    <original>KIILILLQGDRNNLKEYLILQKTSKVDVDSSGKKCKEKMISVLFETKVQTEHKRFLAFEVKEYSALDELQKEFETAGLKKLFSEFVLALVK</original>
    <variation>VLDSSENLQSRCGLKWKEMQREND</variation>
    <location>
        <begin position="177"/>
        <end position="267"/>
    </location>
</feature>
<feature type="splice variant" id="VSP_034176" description="In isoform 2." evidence="12 13 14 16">
    <original>EYLI</original>
    <variation>VPKS</variation>
    <location>
        <begin position="192"/>
        <end position="195"/>
    </location>
</feature>
<feature type="splice variant" id="VSP_034177" description="In isoform 2." evidence="12 13 14 16">
    <location>
        <begin position="196"/>
        <end position="267"/>
    </location>
</feature>
<feature type="sequence variant" id="VAR_034420" description="In dbSNP:rs259358." evidence="3 4 5 11">
    <original>V</original>
    <variation>A</variation>
    <location>
        <position position="47"/>
    </location>
</feature>
<feature type="sequence variant" id="VAR_024346" description="In dbSNP:rs2296308." evidence="3 4 5 11">
    <original>N</original>
    <variation>K</variation>
    <location>
        <position position="86"/>
    </location>
</feature>
<feature type="mutagenesis site" description="Abolishes enhancement of NFKBIA and NR3C1 sumoylation. No effect on NR3C1 transcriptional activity." evidence="6 9">
    <original>YP</original>
    <variation>AA</variation>
    <location>
        <begin position="61"/>
        <end position="62"/>
    </location>
</feature>
<feature type="sequence conflict" description="In Ref. 3; CAG38524." evidence="17" ref="3">
    <original>Q</original>
    <variation>R</variation>
    <location>
        <position position="79"/>
    </location>
</feature>
<feature type="helix" evidence="20">
    <location>
        <begin position="3"/>
        <end position="15"/>
    </location>
</feature>
<feature type="strand" evidence="20">
    <location>
        <begin position="18"/>
        <end position="26"/>
    </location>
</feature>
<feature type="turn" evidence="20">
    <location>
        <begin position="29"/>
        <end position="31"/>
    </location>
</feature>
<feature type="strand" evidence="20">
    <location>
        <begin position="33"/>
        <end position="37"/>
    </location>
</feature>
<feature type="turn" evidence="19">
    <location>
        <begin position="43"/>
        <end position="46"/>
    </location>
</feature>
<feature type="strand" evidence="20">
    <location>
        <begin position="52"/>
        <end position="57"/>
    </location>
</feature>
<feature type="turn" evidence="20">
    <location>
        <begin position="59"/>
        <end position="63"/>
    </location>
</feature>
<feature type="strand" evidence="19">
    <location>
        <begin position="73"/>
        <end position="75"/>
    </location>
</feature>
<feature type="helix" evidence="20">
    <location>
        <begin position="78"/>
        <end position="87"/>
    </location>
</feature>
<feature type="helix" evidence="20">
    <location>
        <begin position="89"/>
        <end position="93"/>
    </location>
</feature>
<feature type="turn" evidence="19">
    <location>
        <begin position="94"/>
        <end position="96"/>
    </location>
</feature>
<feature type="helix" evidence="20">
    <location>
        <begin position="100"/>
        <end position="106"/>
    </location>
</feature>
<feature type="strand" evidence="20">
    <location>
        <begin position="107"/>
        <end position="109"/>
    </location>
</feature>
<feature type="helix" evidence="19">
    <location>
        <begin position="111"/>
        <end position="115"/>
    </location>
</feature>
<reference key="1">
    <citation type="journal article" date="2001" name="Genome Res.">
        <title>Towards a catalog of human genes and proteins: sequencing and analysis of 500 novel complete protein coding human cDNAs.</title>
        <authorList>
            <person name="Wiemann S."/>
            <person name="Weil B."/>
            <person name="Wellenreuther R."/>
            <person name="Gassenhuber J."/>
            <person name="Glassl S."/>
            <person name="Ansorge W."/>
            <person name="Boecher M."/>
            <person name="Bloecker H."/>
            <person name="Bauersachs S."/>
            <person name="Blum H."/>
            <person name="Lauber J."/>
            <person name="Duesterhoeft A."/>
            <person name="Beyer A."/>
            <person name="Koehrer K."/>
            <person name="Strack N."/>
            <person name="Mewes H.-W."/>
            <person name="Ottenwaelder B."/>
            <person name="Obermaier B."/>
            <person name="Tampe J."/>
            <person name="Heubner D."/>
            <person name="Wambutt R."/>
            <person name="Korn B."/>
            <person name="Klein M."/>
            <person name="Poustka A."/>
        </authorList>
    </citation>
    <scope>NUCLEOTIDE SEQUENCE [LARGE SCALE MRNA] (ISOFORM 2)</scope>
    <scope>VARIANTS ALA-47 AND LYS-86</scope>
    <source>
        <tissue>Kidney</tissue>
    </source>
</reference>
<reference key="2">
    <citation type="journal article" date="2004" name="Nat. Genet.">
        <title>Complete sequencing and characterization of 21,243 full-length human cDNAs.</title>
        <authorList>
            <person name="Ota T."/>
            <person name="Suzuki Y."/>
            <person name="Nishikawa T."/>
            <person name="Otsuki T."/>
            <person name="Sugiyama T."/>
            <person name="Irie R."/>
            <person name="Wakamatsu A."/>
            <person name="Hayashi K."/>
            <person name="Sato H."/>
            <person name="Nagai K."/>
            <person name="Kimura K."/>
            <person name="Makita H."/>
            <person name="Sekine M."/>
            <person name="Obayashi M."/>
            <person name="Nishi T."/>
            <person name="Shibahara T."/>
            <person name="Tanaka T."/>
            <person name="Ishii S."/>
            <person name="Yamamoto J."/>
            <person name="Saito K."/>
            <person name="Kawai Y."/>
            <person name="Isono Y."/>
            <person name="Nakamura Y."/>
            <person name="Nagahari K."/>
            <person name="Murakami K."/>
            <person name="Yasuda T."/>
            <person name="Iwayanagi T."/>
            <person name="Wagatsuma M."/>
            <person name="Shiratori A."/>
            <person name="Sudo H."/>
            <person name="Hosoiri T."/>
            <person name="Kaku Y."/>
            <person name="Kodaira H."/>
            <person name="Kondo H."/>
            <person name="Sugawara M."/>
            <person name="Takahashi M."/>
            <person name="Kanda K."/>
            <person name="Yokoi T."/>
            <person name="Furuya T."/>
            <person name="Kikkawa E."/>
            <person name="Omura Y."/>
            <person name="Abe K."/>
            <person name="Kamihara K."/>
            <person name="Katsuta N."/>
            <person name="Sato K."/>
            <person name="Tanikawa M."/>
            <person name="Yamazaki M."/>
            <person name="Ninomiya K."/>
            <person name="Ishibashi T."/>
            <person name="Yamashita H."/>
            <person name="Murakawa K."/>
            <person name="Fujimori K."/>
            <person name="Tanai H."/>
            <person name="Kimata M."/>
            <person name="Watanabe M."/>
            <person name="Hiraoka S."/>
            <person name="Chiba Y."/>
            <person name="Ishida S."/>
            <person name="Ono Y."/>
            <person name="Takiguchi S."/>
            <person name="Watanabe S."/>
            <person name="Yosida M."/>
            <person name="Hotuta T."/>
            <person name="Kusano J."/>
            <person name="Kanehori K."/>
            <person name="Takahashi-Fujii A."/>
            <person name="Hara H."/>
            <person name="Tanase T.-O."/>
            <person name="Nomura Y."/>
            <person name="Togiya S."/>
            <person name="Komai F."/>
            <person name="Hara R."/>
            <person name="Takeuchi K."/>
            <person name="Arita M."/>
            <person name="Imose N."/>
            <person name="Musashino K."/>
            <person name="Yuuki H."/>
            <person name="Oshima A."/>
            <person name="Sasaki N."/>
            <person name="Aotsuka S."/>
            <person name="Yoshikawa Y."/>
            <person name="Matsunawa H."/>
            <person name="Ichihara T."/>
            <person name="Shiohata N."/>
            <person name="Sano S."/>
            <person name="Moriya S."/>
            <person name="Momiyama H."/>
            <person name="Satoh N."/>
            <person name="Takami S."/>
            <person name="Terashima Y."/>
            <person name="Suzuki O."/>
            <person name="Nakagawa S."/>
            <person name="Senoh A."/>
            <person name="Mizoguchi H."/>
            <person name="Goto Y."/>
            <person name="Shimizu F."/>
            <person name="Wakebe H."/>
            <person name="Hishigaki H."/>
            <person name="Watanabe T."/>
            <person name="Sugiyama A."/>
            <person name="Takemoto M."/>
            <person name="Kawakami B."/>
            <person name="Yamazaki M."/>
            <person name="Watanabe K."/>
            <person name="Kumagai A."/>
            <person name="Itakura S."/>
            <person name="Fukuzumi Y."/>
            <person name="Fujimori Y."/>
            <person name="Komiyama M."/>
            <person name="Tashiro H."/>
            <person name="Tanigami A."/>
            <person name="Fujiwara T."/>
            <person name="Ono T."/>
            <person name="Yamada K."/>
            <person name="Fujii Y."/>
            <person name="Ozaki K."/>
            <person name="Hirao M."/>
            <person name="Ohmori Y."/>
            <person name="Kawabata A."/>
            <person name="Hikiji T."/>
            <person name="Kobatake N."/>
            <person name="Inagaki H."/>
            <person name="Ikema Y."/>
            <person name="Okamoto S."/>
            <person name="Okitani R."/>
            <person name="Kawakami T."/>
            <person name="Noguchi S."/>
            <person name="Itoh T."/>
            <person name="Shigeta K."/>
            <person name="Senba T."/>
            <person name="Matsumura K."/>
            <person name="Nakajima Y."/>
            <person name="Mizuno T."/>
            <person name="Morinaga M."/>
            <person name="Sasaki M."/>
            <person name="Togashi T."/>
            <person name="Oyama M."/>
            <person name="Hata H."/>
            <person name="Watanabe M."/>
            <person name="Komatsu T."/>
            <person name="Mizushima-Sugano J."/>
            <person name="Satoh T."/>
            <person name="Shirai Y."/>
            <person name="Takahashi Y."/>
            <person name="Nakagawa K."/>
            <person name="Okumura K."/>
            <person name="Nagase T."/>
            <person name="Nomura N."/>
            <person name="Kikuchi H."/>
            <person name="Masuho Y."/>
            <person name="Yamashita R."/>
            <person name="Nakai K."/>
            <person name="Yada T."/>
            <person name="Nakamura Y."/>
            <person name="Ohara O."/>
            <person name="Isogai T."/>
            <person name="Sugano S."/>
        </authorList>
    </citation>
    <scope>NUCLEOTIDE SEQUENCE [LARGE SCALE MRNA] (ISOFORMS 2 AND 3)</scope>
    <scope>VARIANTS ALA-47 AND LYS-86</scope>
    <source>
        <tissue>Thymus</tissue>
    </source>
</reference>
<reference key="3">
    <citation type="submission" date="2004-06" db="EMBL/GenBank/DDBJ databases">
        <title>Cloning of human full open reading frames in Gateway(TM) system entry vector (pDONR201).</title>
        <authorList>
            <person name="Ebert L."/>
            <person name="Schick M."/>
            <person name="Neubert P."/>
            <person name="Schatten R."/>
            <person name="Henze S."/>
            <person name="Korn B."/>
        </authorList>
    </citation>
    <scope>NUCLEOTIDE SEQUENCE [LARGE SCALE MRNA] (ISOFORM 2)</scope>
    <scope>VARIANTS ALA-47 AND LYS-86</scope>
</reference>
<reference key="4">
    <citation type="journal article" date="2006" name="Nature">
        <title>The DNA sequence and biological annotation of human chromosome 1.</title>
        <authorList>
            <person name="Gregory S.G."/>
            <person name="Barlow K.F."/>
            <person name="McLay K.E."/>
            <person name="Kaul R."/>
            <person name="Swarbreck D."/>
            <person name="Dunham A."/>
            <person name="Scott C.E."/>
            <person name="Howe K.L."/>
            <person name="Woodfine K."/>
            <person name="Spencer C.C.A."/>
            <person name="Jones M.C."/>
            <person name="Gillson C."/>
            <person name="Searle S."/>
            <person name="Zhou Y."/>
            <person name="Kokocinski F."/>
            <person name="McDonald L."/>
            <person name="Evans R."/>
            <person name="Phillips K."/>
            <person name="Atkinson A."/>
            <person name="Cooper R."/>
            <person name="Jones C."/>
            <person name="Hall R.E."/>
            <person name="Andrews T.D."/>
            <person name="Lloyd C."/>
            <person name="Ainscough R."/>
            <person name="Almeida J.P."/>
            <person name="Ambrose K.D."/>
            <person name="Anderson F."/>
            <person name="Andrew R.W."/>
            <person name="Ashwell R.I.S."/>
            <person name="Aubin K."/>
            <person name="Babbage A.K."/>
            <person name="Bagguley C.L."/>
            <person name="Bailey J."/>
            <person name="Beasley H."/>
            <person name="Bethel G."/>
            <person name="Bird C.P."/>
            <person name="Bray-Allen S."/>
            <person name="Brown J.Y."/>
            <person name="Brown A.J."/>
            <person name="Buckley D."/>
            <person name="Burton J."/>
            <person name="Bye J."/>
            <person name="Carder C."/>
            <person name="Chapman J.C."/>
            <person name="Clark S.Y."/>
            <person name="Clarke G."/>
            <person name="Clee C."/>
            <person name="Cobley V."/>
            <person name="Collier R.E."/>
            <person name="Corby N."/>
            <person name="Coville G.J."/>
            <person name="Davies J."/>
            <person name="Deadman R."/>
            <person name="Dunn M."/>
            <person name="Earthrowl M."/>
            <person name="Ellington A.G."/>
            <person name="Errington H."/>
            <person name="Frankish A."/>
            <person name="Frankland J."/>
            <person name="French L."/>
            <person name="Garner P."/>
            <person name="Garnett J."/>
            <person name="Gay L."/>
            <person name="Ghori M.R.J."/>
            <person name="Gibson R."/>
            <person name="Gilby L.M."/>
            <person name="Gillett W."/>
            <person name="Glithero R.J."/>
            <person name="Grafham D.V."/>
            <person name="Griffiths C."/>
            <person name="Griffiths-Jones S."/>
            <person name="Grocock R."/>
            <person name="Hammond S."/>
            <person name="Harrison E.S.I."/>
            <person name="Hart E."/>
            <person name="Haugen E."/>
            <person name="Heath P.D."/>
            <person name="Holmes S."/>
            <person name="Holt K."/>
            <person name="Howden P.J."/>
            <person name="Hunt A.R."/>
            <person name="Hunt S.E."/>
            <person name="Hunter G."/>
            <person name="Isherwood J."/>
            <person name="James R."/>
            <person name="Johnson C."/>
            <person name="Johnson D."/>
            <person name="Joy A."/>
            <person name="Kay M."/>
            <person name="Kershaw J.K."/>
            <person name="Kibukawa M."/>
            <person name="Kimberley A.M."/>
            <person name="King A."/>
            <person name="Knights A.J."/>
            <person name="Lad H."/>
            <person name="Laird G."/>
            <person name="Lawlor S."/>
            <person name="Leongamornlert D.A."/>
            <person name="Lloyd D.M."/>
            <person name="Loveland J."/>
            <person name="Lovell J."/>
            <person name="Lush M.J."/>
            <person name="Lyne R."/>
            <person name="Martin S."/>
            <person name="Mashreghi-Mohammadi M."/>
            <person name="Matthews L."/>
            <person name="Matthews N.S.W."/>
            <person name="McLaren S."/>
            <person name="Milne S."/>
            <person name="Mistry S."/>
            <person name="Moore M.J.F."/>
            <person name="Nickerson T."/>
            <person name="O'Dell C.N."/>
            <person name="Oliver K."/>
            <person name="Palmeiri A."/>
            <person name="Palmer S.A."/>
            <person name="Parker A."/>
            <person name="Patel D."/>
            <person name="Pearce A.V."/>
            <person name="Peck A.I."/>
            <person name="Pelan S."/>
            <person name="Phelps K."/>
            <person name="Phillimore B.J."/>
            <person name="Plumb R."/>
            <person name="Rajan J."/>
            <person name="Raymond C."/>
            <person name="Rouse G."/>
            <person name="Saenphimmachak C."/>
            <person name="Sehra H.K."/>
            <person name="Sheridan E."/>
            <person name="Shownkeen R."/>
            <person name="Sims S."/>
            <person name="Skuce C.D."/>
            <person name="Smith M."/>
            <person name="Steward C."/>
            <person name="Subramanian S."/>
            <person name="Sycamore N."/>
            <person name="Tracey A."/>
            <person name="Tromans A."/>
            <person name="Van Helmond Z."/>
            <person name="Wall M."/>
            <person name="Wallis J.M."/>
            <person name="White S."/>
            <person name="Whitehead S.L."/>
            <person name="Wilkinson J.E."/>
            <person name="Willey D.L."/>
            <person name="Williams H."/>
            <person name="Wilming L."/>
            <person name="Wray P.W."/>
            <person name="Wu Z."/>
            <person name="Coulson A."/>
            <person name="Vaudin M."/>
            <person name="Sulston J.E."/>
            <person name="Durbin R.M."/>
            <person name="Hubbard T."/>
            <person name="Wooster R."/>
            <person name="Dunham I."/>
            <person name="Carter N.P."/>
            <person name="McVean G."/>
            <person name="Ross M.T."/>
            <person name="Harrow J."/>
            <person name="Olson M.V."/>
            <person name="Beck S."/>
            <person name="Rogers J."/>
            <person name="Bentley D.R."/>
        </authorList>
    </citation>
    <scope>NUCLEOTIDE SEQUENCE [LARGE SCALE GENOMIC DNA]</scope>
</reference>
<reference key="5">
    <citation type="journal article" date="2004" name="Genome Res.">
        <title>The status, quality, and expansion of the NIH full-length cDNA project: the Mammalian Gene Collection (MGC).</title>
        <authorList>
            <consortium name="The MGC Project Team"/>
        </authorList>
    </citation>
    <scope>NUCLEOTIDE SEQUENCE [LARGE SCALE MRNA] (ISOFORM 2)</scope>
    <scope>VARIANTS ALA-47 AND LYS-86</scope>
    <source>
        <tissue>Brain</tissue>
    </source>
</reference>
<reference key="6">
    <citation type="journal article" date="2007" name="Cell">
        <title>RSUME, a small RWD-containing protein, enhances SUMO conjugation and stabilizes HIF-1alpha during hypoxia.</title>
        <authorList>
            <person name="Carbia-Nagashima A."/>
            <person name="Gerez J."/>
            <person name="Perez-Castro C."/>
            <person name="Paez-Pereda M."/>
            <person name="Silberstein S."/>
            <person name="Stalla G.K."/>
            <person name="Holsboer F."/>
            <person name="Arzt E."/>
        </authorList>
    </citation>
    <scope>FUNCTION</scope>
    <scope>INTERACTION WITH UBE2I; SUMO1; NFKBIA AND HIF1A</scope>
    <scope>INDUCTION</scope>
    <scope>SUBCELLULAR LOCATION</scope>
    <scope>TISSUE SPECIFICITY</scope>
    <scope>MUTAGENESIS OF 61-TYR-PRO-62</scope>
</reference>
<reference key="7">
    <citation type="journal article" date="2012" name="Endocr. Relat. Cancer">
        <title>RSUME is implicated in HIF-1-induced VEGF-A production in pituitary tumour cells.</title>
        <authorList>
            <person name="Shan B."/>
            <person name="Gerez J."/>
            <person name="Haedo M."/>
            <person name="Fuertes M."/>
            <person name="Theodoropoulou M."/>
            <person name="Buchfelder M."/>
            <person name="Losa M."/>
            <person name="Stalla G.K."/>
            <person name="Arzt E."/>
            <person name="Renner U."/>
        </authorList>
    </citation>
    <scope>FUNCTION</scope>
    <scope>TISSUE SPECIFICITY</scope>
    <scope>INDUCTION</scope>
</reference>
<reference key="8">
    <citation type="journal article" date="2013" name="Mol. Cell. Biol.">
        <title>RSUME enhances glucocorticoid receptor SUMOylation and transcriptional activity.</title>
        <authorList>
            <person name="Druker J."/>
            <person name="Liberman A.C."/>
            <person name="Antunica-Noguerol M."/>
            <person name="Gerez J."/>
            <person name="Paez-Pereda M."/>
            <person name="Rein T."/>
            <person name="Iniguez-Lluhi J.A."/>
            <person name="Holsboer F."/>
            <person name="Arzt E."/>
        </authorList>
    </citation>
    <scope>FUNCTION</scope>
    <scope>INTERACTION WITH NR3C1 AND NCOA2</scope>
    <scope>MUTAGENESIS OF 61-TYR-PRO-62</scope>
</reference>
<reference key="9">
    <citation type="journal article" date="2013" name="PLoS ONE">
        <title>In silico structural and functional characterization of the RSUME splice variants.</title>
        <authorList>
            <person name="Gerez J."/>
            <person name="Fuertes M."/>
            <person name="Tedesco L."/>
            <person name="Silberstein S."/>
            <person name="Sevlever G."/>
            <person name="Paez-Pereda M."/>
            <person name="Holsboer F."/>
            <person name="Turjanski A.G."/>
            <person name="Arzt E."/>
        </authorList>
    </citation>
    <scope>FUNCTION</scope>
    <scope>ALTERNATIVE SPLICING (ISOFORM 4)</scope>
    <scope>INTERACTION WITH UBE2I; NFKBIA AND HIF1A</scope>
    <scope>INDUCTION</scope>
    <scope>TISSUE SPECIFICITY</scope>
</reference>
<reference key="10">
    <citation type="submission" date="2007-08" db="PDB data bank">
        <title>Solution structure of the RWD domain of human RWD domain containing protein 3.</title>
        <authorList>
            <consortium name="RIKEN structural genomics initiative (RSGI)"/>
        </authorList>
    </citation>
    <scope>STRUCTURE BY NMR OF 1-121</scope>
</reference>
<reference evidence="18" key="11">
    <citation type="journal article" date="2015" name="J. Biol. Chem.">
        <title>RWD domain as an E2 (Ubc9)-interaction module.</title>
        <authorList>
            <person name="Alontaga A.Y."/>
            <person name="Ambaye N.D."/>
            <person name="Li Y.J."/>
            <person name="Vega R."/>
            <person name="Chen C.H."/>
            <person name="Bzymek K.P."/>
            <person name="Williams J.C."/>
            <person name="Hu W."/>
            <person name="Chen Y."/>
        </authorList>
    </citation>
    <scope>X-RAY CRYSTALLOGRAPHY (2.70 ANGSTROMS) IN COMPLEX WITH UBC9</scope>
    <scope>INTERACTION WITH UBC9</scope>
    <scope>DOMAIN</scope>
    <scope>NMR</scope>
</reference>
<sequence>MAEPVQEELSVLAAIFCRPHEWEVLSRSETDGTVFRIHTKAEGFMDVDIPLELVFHLPVNYPSCLPGISINSEQLTRAQCVTVKENLLEQAESLLSEPMVHELVLWIQQNLRHILSQPETGSGSEKCTFSTSTTMDDGLWITLLHLDHMRAKTKYVKIVEKWASDLRLTGRLMFMGKIILILLQGDRNNLKEYLILQKTSKVDVDSSGKKCKEKMISVLFETKVQTEHKRFLAFEVKEYSALDELQKEFETAGLKKLFSEFVLALVK</sequence>
<accession>Q9Y3V2</accession>
<accession>A6NP44</accession>
<accession>A8K9F0</accession>
<accession>C9J9L7</accession>
<accession>C9JI45</accession>
<accession>Q08AJ7</accession>
<accession>Q6FID3</accession>
<accession>Q9BX35</accession>
<proteinExistence type="evidence at protein level"/>
<dbReference type="EMBL" id="AL050062">
    <property type="protein sequence ID" value="CAB43254.2"/>
    <property type="molecule type" value="mRNA"/>
</dbReference>
<dbReference type="EMBL" id="AK292665">
    <property type="protein sequence ID" value="BAF85354.1"/>
    <property type="molecule type" value="mRNA"/>
</dbReference>
<dbReference type="EMBL" id="AK292699">
    <property type="protein sequence ID" value="BAF85388.1"/>
    <property type="molecule type" value="mRNA"/>
</dbReference>
<dbReference type="EMBL" id="CR533493">
    <property type="protein sequence ID" value="CAG38524.1"/>
    <property type="molecule type" value="mRNA"/>
</dbReference>
<dbReference type="EMBL" id="AC092802">
    <property type="status" value="NOT_ANNOTATED_CDS"/>
    <property type="molecule type" value="Genomic_DNA"/>
</dbReference>
<dbReference type="EMBL" id="BC010936">
    <property type="status" value="NOT_ANNOTATED_CDS"/>
    <property type="molecule type" value="mRNA"/>
</dbReference>
<dbReference type="EMBL" id="BC125142">
    <property type="protein sequence ID" value="AAI25143.1"/>
    <property type="molecule type" value="mRNA"/>
</dbReference>
<dbReference type="CCDS" id="CCDS41357.1">
    <molecule id="Q9Y3V2-1"/>
</dbReference>
<dbReference type="CCDS" id="CCDS44177.1">
    <molecule id="Q9Y3V2-2"/>
</dbReference>
<dbReference type="RefSeq" id="NP_001121614.2">
    <molecule id="Q9Y3V2-2"/>
    <property type="nucleotide sequence ID" value="NM_001128142.2"/>
</dbReference>
<dbReference type="RefSeq" id="NP_001186611.2">
    <molecule id="Q9Y3V2-4"/>
    <property type="nucleotide sequence ID" value="NM_001199682.2"/>
</dbReference>
<dbReference type="RefSeq" id="NP_001265176.2">
    <molecule id="Q9Y3V2-3"/>
    <property type="nucleotide sequence ID" value="NM_001278247.2"/>
</dbReference>
<dbReference type="RefSeq" id="NP_001265177.1">
    <property type="nucleotide sequence ID" value="NM_001278248.1"/>
</dbReference>
<dbReference type="RefSeq" id="NP_056300.3">
    <molecule id="Q9Y3V2-1"/>
    <property type="nucleotide sequence ID" value="NM_015485.5"/>
</dbReference>
<dbReference type="PDB" id="2EBK">
    <property type="method" value="NMR"/>
    <property type="chains" value="A=1-121"/>
</dbReference>
<dbReference type="PDB" id="4Y1L">
    <property type="method" value="X-ray"/>
    <property type="resolution" value="2.70 A"/>
    <property type="chains" value="C=2-113"/>
</dbReference>
<dbReference type="PDBsum" id="2EBK"/>
<dbReference type="PDBsum" id="4Y1L"/>
<dbReference type="BMRB" id="Q9Y3V2"/>
<dbReference type="SMR" id="Q9Y3V2"/>
<dbReference type="BioGRID" id="117445">
    <property type="interactions" value="9"/>
</dbReference>
<dbReference type="FunCoup" id="Q9Y3V2">
    <property type="interactions" value="240"/>
</dbReference>
<dbReference type="IntAct" id="Q9Y3V2">
    <property type="interactions" value="4"/>
</dbReference>
<dbReference type="STRING" id="9606.ENSP00000359221"/>
<dbReference type="iPTMnet" id="Q9Y3V2"/>
<dbReference type="PhosphoSitePlus" id="Q9Y3V2"/>
<dbReference type="BioMuta" id="RWDD3"/>
<dbReference type="DMDM" id="296453018"/>
<dbReference type="jPOST" id="Q9Y3V2"/>
<dbReference type="MassIVE" id="Q9Y3V2"/>
<dbReference type="PaxDb" id="9606-ENSP00000359221"/>
<dbReference type="PeptideAtlas" id="Q9Y3V2"/>
<dbReference type="ProteomicsDB" id="86080">
    <molecule id="Q9Y3V2-1"/>
</dbReference>
<dbReference type="ProteomicsDB" id="86081">
    <molecule id="Q9Y3V2-2"/>
</dbReference>
<dbReference type="ProteomicsDB" id="86082">
    <molecule id="Q9Y3V2-3"/>
</dbReference>
<dbReference type="Pumba" id="Q9Y3V2"/>
<dbReference type="Antibodypedia" id="33670">
    <property type="antibodies" value="141 antibodies from 22 providers"/>
</dbReference>
<dbReference type="DNASU" id="25950"/>
<dbReference type="Ensembl" id="ENST00000263893.10">
    <molecule id="Q9Y3V2-2"/>
    <property type="protein sequence ID" value="ENSP00000263893.6"/>
    <property type="gene ID" value="ENSG00000122481.17"/>
</dbReference>
<dbReference type="Ensembl" id="ENST00000370202.5">
    <molecule id="Q9Y3V2-1"/>
    <property type="protein sequence ID" value="ENSP00000359221.4"/>
    <property type="gene ID" value="ENSG00000122481.17"/>
</dbReference>
<dbReference type="GeneID" id="25950"/>
<dbReference type="KEGG" id="hsa:25950"/>
<dbReference type="MANE-Select" id="ENST00000370202.5">
    <property type="protein sequence ID" value="ENSP00000359221.4"/>
    <property type="RefSeq nucleotide sequence ID" value="NM_015485.5"/>
    <property type="RefSeq protein sequence ID" value="NP_056300.3"/>
</dbReference>
<dbReference type="UCSC" id="uc001drf.5">
    <molecule id="Q9Y3V2-1"/>
    <property type="organism name" value="human"/>
</dbReference>
<dbReference type="AGR" id="HGNC:21393"/>
<dbReference type="CTD" id="25950"/>
<dbReference type="DisGeNET" id="25950"/>
<dbReference type="GeneCards" id="RWDD3"/>
<dbReference type="HGNC" id="HGNC:21393">
    <property type="gene designation" value="RWDD3"/>
</dbReference>
<dbReference type="HPA" id="ENSG00000122481">
    <property type="expression patterns" value="Low tissue specificity"/>
</dbReference>
<dbReference type="MIM" id="615875">
    <property type="type" value="gene"/>
</dbReference>
<dbReference type="neXtProt" id="NX_Q9Y3V2"/>
<dbReference type="OpenTargets" id="ENSG00000122481"/>
<dbReference type="PharmGKB" id="PA134974302"/>
<dbReference type="VEuPathDB" id="HostDB:ENSG00000122481"/>
<dbReference type="eggNOG" id="ENOG502QSYH">
    <property type="taxonomic scope" value="Eukaryota"/>
</dbReference>
<dbReference type="GeneTree" id="ENSGT00390000000954"/>
<dbReference type="HOGENOM" id="CLU_087636_0_0_1"/>
<dbReference type="InParanoid" id="Q9Y3V2"/>
<dbReference type="OMA" id="GITFRIQ"/>
<dbReference type="OrthoDB" id="167315at2759"/>
<dbReference type="PAN-GO" id="Q9Y3V2">
    <property type="GO annotations" value="1 GO annotation based on evolutionary models"/>
</dbReference>
<dbReference type="PhylomeDB" id="Q9Y3V2"/>
<dbReference type="TreeFam" id="TF324344"/>
<dbReference type="PathwayCommons" id="Q9Y3V2"/>
<dbReference type="Reactome" id="R-HSA-3065678">
    <property type="pathway name" value="SUMO is transferred from E1 to E2 (UBE2I, UBC9)"/>
</dbReference>
<dbReference type="SignaLink" id="Q9Y3V2"/>
<dbReference type="SIGNOR" id="Q9Y3V2"/>
<dbReference type="BioGRID-ORCS" id="25950">
    <property type="hits" value="7 hits in 1147 CRISPR screens"/>
</dbReference>
<dbReference type="ChiTaRS" id="RWDD3">
    <property type="organism name" value="human"/>
</dbReference>
<dbReference type="EvolutionaryTrace" id="Q9Y3V2"/>
<dbReference type="GeneWiki" id="RWDD3"/>
<dbReference type="GenomeRNAi" id="25950"/>
<dbReference type="Pharos" id="Q9Y3V2">
    <property type="development level" value="Tbio"/>
</dbReference>
<dbReference type="PRO" id="PR:Q9Y3V2"/>
<dbReference type="Proteomes" id="UP000005640">
    <property type="component" value="Chromosome 1"/>
</dbReference>
<dbReference type="RNAct" id="Q9Y3V2">
    <property type="molecule type" value="protein"/>
</dbReference>
<dbReference type="Bgee" id="ENSG00000122481">
    <property type="expression patterns" value="Expressed in endometrium and 97 other cell types or tissues"/>
</dbReference>
<dbReference type="GO" id="GO:0005737">
    <property type="term" value="C:cytoplasm"/>
    <property type="evidence" value="ECO:0007669"/>
    <property type="project" value="UniProtKB-SubCell"/>
</dbReference>
<dbReference type="GO" id="GO:0005634">
    <property type="term" value="C:nucleus"/>
    <property type="evidence" value="ECO:0007669"/>
    <property type="project" value="UniProtKB-SubCell"/>
</dbReference>
<dbReference type="GO" id="GO:0032088">
    <property type="term" value="P:negative regulation of NF-kappaB transcription factor activity"/>
    <property type="evidence" value="ECO:0000314"/>
    <property type="project" value="UniProtKB"/>
</dbReference>
<dbReference type="GO" id="GO:1902073">
    <property type="term" value="P:positive regulation of hypoxia-inducible factor-1alpha signaling pathway"/>
    <property type="evidence" value="ECO:0000314"/>
    <property type="project" value="UniProtKB"/>
</dbReference>
<dbReference type="GO" id="GO:0033235">
    <property type="term" value="P:positive regulation of protein sumoylation"/>
    <property type="evidence" value="ECO:0000314"/>
    <property type="project" value="UniProtKB"/>
</dbReference>
<dbReference type="CDD" id="cd23819">
    <property type="entry name" value="RWD_RWDD3"/>
    <property type="match status" value="1"/>
</dbReference>
<dbReference type="CDD" id="cd24164">
    <property type="entry name" value="RWDD3_C"/>
    <property type="match status" value="1"/>
</dbReference>
<dbReference type="FunFam" id="3.10.110.10:FF:000070">
    <property type="entry name" value="RWD domain containing 3"/>
    <property type="match status" value="1"/>
</dbReference>
<dbReference type="Gene3D" id="3.10.110.10">
    <property type="entry name" value="Ubiquitin Conjugating Enzyme"/>
    <property type="match status" value="1"/>
</dbReference>
<dbReference type="InterPro" id="IPR006575">
    <property type="entry name" value="RWD_dom"/>
</dbReference>
<dbReference type="InterPro" id="IPR038840">
    <property type="entry name" value="RWDD3"/>
</dbReference>
<dbReference type="InterPro" id="IPR016135">
    <property type="entry name" value="UBQ-conjugating_enzyme/RWD"/>
</dbReference>
<dbReference type="PANTHER" id="PTHR15628">
    <property type="entry name" value="RWD DOMAIN-CONTAINING PROTEIN 3"/>
    <property type="match status" value="1"/>
</dbReference>
<dbReference type="PANTHER" id="PTHR15628:SF1">
    <property type="entry name" value="RWD DOMAIN-CONTAINING PROTEIN 3"/>
    <property type="match status" value="1"/>
</dbReference>
<dbReference type="Pfam" id="PF05773">
    <property type="entry name" value="RWD"/>
    <property type="match status" value="1"/>
</dbReference>
<dbReference type="SMART" id="SM00591">
    <property type="entry name" value="RWD"/>
    <property type="match status" value="1"/>
</dbReference>
<dbReference type="SUPFAM" id="SSF54495">
    <property type="entry name" value="UBC-like"/>
    <property type="match status" value="1"/>
</dbReference>
<dbReference type="PROSITE" id="PS50908">
    <property type="entry name" value="RWD"/>
    <property type="match status" value="1"/>
</dbReference>
<gene>
    <name type="primary">RWDD3</name>
    <name type="synonym">RSUME</name>
</gene>
<keyword id="KW-0002">3D-structure</keyword>
<keyword id="KW-0025">Alternative splicing</keyword>
<keyword id="KW-0963">Cytoplasm</keyword>
<keyword id="KW-0539">Nucleus</keyword>
<keyword id="KW-1267">Proteomics identification</keyword>
<keyword id="KW-1185">Reference proteome</keyword>
<comment type="function">
    <text evidence="6 7 8 9">Enhancer of SUMO conjugation. Via its interaction with UBE2I/UBC9, increases SUMO conjugation to proteins by promoting the binding of E1 and E2 enzymes, thioester linkage between SUMO and UBE2I/UBC9 and transfer of SUMO to specific target proteins which include HIF1A, PIAS, NFKBIA, NR3C1 and TOP1. Isoform 1 and isoform 2 positively regulate the NF-kappa-B signaling pathway by enhancing the sumoylation of NF-kappa-B inhibitor alpha (NFKBIA), promoting its stabilization which consequently leads to an increased inhibition of NF-kappa-B transcriptional activity. Isoform 1 and isoform 2 negatively regulate the hypoxia-inducible factor-1 alpha (HIF1A) signaling pathway by increasing the sumoylation of HIF1A, promoting its stabilization, transcriptional activity and the expression of its target gene VEGFA during hypoxia. Isoform 2 promotes the sumoylation and transcriptional activity of the glucocorticoid receptor NR3C1 and enhances the interaction of SUMO1 and NR3C1 with UBE2I/UBC9. Has no effect on ubiquitination.</text>
</comment>
<comment type="subunit">
    <text evidence="6 8 9 10">Isoform 1 and isoform 2 interact with UBE2I/UBC9 (PubMed:17956732, PubMed:23469069, PubMed:25918163). Isoform 1 shows a greater interaction with NFKBIA and HIF1A as compared to isoform 2 (PubMed:17956732, PubMed:23469069). Isoform 2 interacts with NCOA2 and NR3C1 (PubMed:23508108).</text>
</comment>
<comment type="interaction">
    <interactant intactId="EBI-1549885">
        <id>Q9Y3V2</id>
    </interactant>
    <interactant intactId="EBI-80140">
        <id>P63165</id>
        <label>SUMO1</label>
    </interactant>
    <organismsDiffer>false</organismsDiffer>
    <experiments>2</experiments>
</comment>
<comment type="interaction">
    <interactant intactId="EBI-1549885">
        <id>Q9Y3V2</id>
    </interactant>
    <interactant intactId="EBI-80168">
        <id>P63279</id>
        <label>UBE2I</label>
    </interactant>
    <organismsDiffer>false</organismsDiffer>
    <experiments>5</experiments>
</comment>
<comment type="subcellular location">
    <subcellularLocation>
        <location evidence="6">Nucleus</location>
    </subcellularLocation>
    <subcellularLocation>
        <location evidence="6">Cytoplasm</location>
    </subcellularLocation>
    <text evidence="6">Colocalizes with UBC9/UBE2I in nuclear spots.</text>
</comment>
<comment type="alternative products">
    <event type="alternative splicing"/>
    <isoform>
        <id>Q9Y3V2-1</id>
        <name>1</name>
        <sequence type="displayed"/>
    </isoform>
    <isoform>
        <id>Q9Y3V2-2</id>
        <name>2</name>
        <sequence type="described" ref="VSP_034176 VSP_034177"/>
    </isoform>
    <isoform>
        <id>Q9Y3V2-3</id>
        <name>3</name>
        <sequence type="described" ref="VSP_035411 VSP_035412"/>
    </isoform>
    <isoform>
        <id>Q9Y3V2-4</id>
        <name>4</name>
        <sequence type="described" ref="VSP_035412"/>
    </isoform>
</comment>
<comment type="tissue specificity">
    <text evidence="6 7 8">Isoform 1 and isoform 2 are expressed in glioma tumors (at protein level). Expressed in a wide number of tissues with highest expression in cerebellum, pituitary, heart, kidney, liver, stomach, pancreas, prostate and spleen. Low levels in thalamus, spinal cord, esophagus, thymus, lung and peripheral blood leukocytes. A higher level expression seen in pituitary tumors as compared to the pituitary gland.</text>
</comment>
<comment type="induction">
    <text evidence="6 7 8">Induced by hypoxia and heat shock.</text>
</comment>
<comment type="domain">
    <text evidence="1">The RWD domain is required for the sumoylation enhancement activity.</text>
</comment>
<organism>
    <name type="scientific">Homo sapiens</name>
    <name type="common">Human</name>
    <dbReference type="NCBI Taxonomy" id="9606"/>
    <lineage>
        <taxon>Eukaryota</taxon>
        <taxon>Metazoa</taxon>
        <taxon>Chordata</taxon>
        <taxon>Craniata</taxon>
        <taxon>Vertebrata</taxon>
        <taxon>Euteleostomi</taxon>
        <taxon>Mammalia</taxon>
        <taxon>Eutheria</taxon>
        <taxon>Euarchontoglires</taxon>
        <taxon>Primates</taxon>
        <taxon>Haplorrhini</taxon>
        <taxon>Catarrhini</taxon>
        <taxon>Hominidae</taxon>
        <taxon>Homo</taxon>
    </lineage>
</organism>
<evidence type="ECO:0000250" key="1"/>
<evidence type="ECO:0000255" key="2">
    <source>
        <dbReference type="PROSITE-ProRule" id="PRU00179"/>
    </source>
</evidence>
<evidence type="ECO:0000269" key="3">
    <source>
    </source>
</evidence>
<evidence type="ECO:0000269" key="4">
    <source>
    </source>
</evidence>
<evidence type="ECO:0000269" key="5">
    <source>
    </source>
</evidence>
<evidence type="ECO:0000269" key="6">
    <source>
    </source>
</evidence>
<evidence type="ECO:0000269" key="7">
    <source>
    </source>
</evidence>
<evidence type="ECO:0000269" key="8">
    <source>
    </source>
</evidence>
<evidence type="ECO:0000269" key="9">
    <source>
    </source>
</evidence>
<evidence type="ECO:0000269" key="10">
    <source>
    </source>
</evidence>
<evidence type="ECO:0000269" key="11">
    <source ref="3"/>
</evidence>
<evidence type="ECO:0000303" key="12">
    <source>
    </source>
</evidence>
<evidence type="ECO:0000303" key="13">
    <source>
    </source>
</evidence>
<evidence type="ECO:0000303" key="14">
    <source>
    </source>
</evidence>
<evidence type="ECO:0000303" key="15">
    <source>
    </source>
</evidence>
<evidence type="ECO:0000303" key="16">
    <source ref="3"/>
</evidence>
<evidence type="ECO:0000305" key="17"/>
<evidence type="ECO:0007744" key="18">
    <source>
        <dbReference type="PDB" id="4Y1L"/>
    </source>
</evidence>
<evidence type="ECO:0007829" key="19">
    <source>
        <dbReference type="PDB" id="2EBK"/>
    </source>
</evidence>
<evidence type="ECO:0007829" key="20">
    <source>
        <dbReference type="PDB" id="4Y1L"/>
    </source>
</evidence>
<name>RWDD3_HUMAN</name>